<reference key="1">
    <citation type="journal article" date="2009" name="Genome Res.">
        <title>Newly introduced genomic prophage islands are critical determinants of in vivo competitiveness in the Liverpool epidemic strain of Pseudomonas aeruginosa.</title>
        <authorList>
            <person name="Winstanley C."/>
            <person name="Langille M.G.I."/>
            <person name="Fothergill J.L."/>
            <person name="Kukavica-Ibrulj I."/>
            <person name="Paradis-Bleau C."/>
            <person name="Sanschagrin F."/>
            <person name="Thomson N.R."/>
            <person name="Winsor G.L."/>
            <person name="Quail M.A."/>
            <person name="Lennard N."/>
            <person name="Bignell A."/>
            <person name="Clarke L."/>
            <person name="Seeger K."/>
            <person name="Saunders D."/>
            <person name="Harris D."/>
            <person name="Parkhill J."/>
            <person name="Hancock R.E.W."/>
            <person name="Brinkman F.S.L."/>
            <person name="Levesque R.C."/>
        </authorList>
    </citation>
    <scope>NUCLEOTIDE SEQUENCE [LARGE SCALE GENOMIC DNA]</scope>
    <source>
        <strain>LESB58</strain>
    </source>
</reference>
<gene>
    <name evidence="1" type="primary">trpF</name>
    <name type="ordered locus">PLES_19461</name>
</gene>
<protein>
    <recommendedName>
        <fullName evidence="1">N-(5'-phosphoribosyl)anthranilate isomerase</fullName>
        <shortName evidence="1">PRAI</shortName>
        <ecNumber evidence="1">5.3.1.24</ecNumber>
    </recommendedName>
</protein>
<evidence type="ECO:0000255" key="1">
    <source>
        <dbReference type="HAMAP-Rule" id="MF_00135"/>
    </source>
</evidence>
<name>TRPF_PSEA8</name>
<accession>B7VBQ7</accession>
<feature type="chain" id="PRO_1000197116" description="N-(5'-phosphoribosyl)anthranilate isomerase">
    <location>
        <begin position="1"/>
        <end position="211"/>
    </location>
</feature>
<dbReference type="EC" id="5.3.1.24" evidence="1"/>
<dbReference type="EMBL" id="FM209186">
    <property type="protein sequence ID" value="CAW26674.1"/>
    <property type="molecule type" value="Genomic_DNA"/>
</dbReference>
<dbReference type="RefSeq" id="WP_003116445.1">
    <property type="nucleotide sequence ID" value="NC_011770.1"/>
</dbReference>
<dbReference type="SMR" id="B7VBQ7"/>
<dbReference type="KEGG" id="pag:PLES_19461"/>
<dbReference type="HOGENOM" id="CLU_076364_2_0_6"/>
<dbReference type="UniPathway" id="UPA00035">
    <property type="reaction ID" value="UER00042"/>
</dbReference>
<dbReference type="GO" id="GO:0004640">
    <property type="term" value="F:phosphoribosylanthranilate isomerase activity"/>
    <property type="evidence" value="ECO:0007669"/>
    <property type="project" value="UniProtKB-UniRule"/>
</dbReference>
<dbReference type="GO" id="GO:0000162">
    <property type="term" value="P:L-tryptophan biosynthetic process"/>
    <property type="evidence" value="ECO:0007669"/>
    <property type="project" value="UniProtKB-UniRule"/>
</dbReference>
<dbReference type="CDD" id="cd00405">
    <property type="entry name" value="PRAI"/>
    <property type="match status" value="1"/>
</dbReference>
<dbReference type="FunFam" id="3.20.20.70:FF:000075">
    <property type="entry name" value="Tryptophan biosynthesis protein TRP1"/>
    <property type="match status" value="1"/>
</dbReference>
<dbReference type="Gene3D" id="3.20.20.70">
    <property type="entry name" value="Aldolase class I"/>
    <property type="match status" value="1"/>
</dbReference>
<dbReference type="HAMAP" id="MF_00135">
    <property type="entry name" value="PRAI"/>
    <property type="match status" value="1"/>
</dbReference>
<dbReference type="InterPro" id="IPR013785">
    <property type="entry name" value="Aldolase_TIM"/>
</dbReference>
<dbReference type="InterPro" id="IPR001240">
    <property type="entry name" value="PRAI_dom"/>
</dbReference>
<dbReference type="InterPro" id="IPR011060">
    <property type="entry name" value="RibuloseP-bd_barrel"/>
</dbReference>
<dbReference type="InterPro" id="IPR044643">
    <property type="entry name" value="TrpF_fam"/>
</dbReference>
<dbReference type="NCBIfam" id="NF002298">
    <property type="entry name" value="PRK01222.1-4"/>
    <property type="match status" value="1"/>
</dbReference>
<dbReference type="NCBIfam" id="NF002299">
    <property type="entry name" value="PRK01222.1-6"/>
    <property type="match status" value="1"/>
</dbReference>
<dbReference type="PANTHER" id="PTHR42894">
    <property type="entry name" value="N-(5'-PHOSPHORIBOSYL)ANTHRANILATE ISOMERASE"/>
    <property type="match status" value="1"/>
</dbReference>
<dbReference type="PANTHER" id="PTHR42894:SF1">
    <property type="entry name" value="N-(5'-PHOSPHORIBOSYL)ANTHRANILATE ISOMERASE"/>
    <property type="match status" value="1"/>
</dbReference>
<dbReference type="Pfam" id="PF00697">
    <property type="entry name" value="PRAI"/>
    <property type="match status" value="1"/>
</dbReference>
<dbReference type="SUPFAM" id="SSF51366">
    <property type="entry name" value="Ribulose-phoshate binding barrel"/>
    <property type="match status" value="1"/>
</dbReference>
<organism>
    <name type="scientific">Pseudomonas aeruginosa (strain LESB58)</name>
    <dbReference type="NCBI Taxonomy" id="557722"/>
    <lineage>
        <taxon>Bacteria</taxon>
        <taxon>Pseudomonadati</taxon>
        <taxon>Pseudomonadota</taxon>
        <taxon>Gammaproteobacteria</taxon>
        <taxon>Pseudomonadales</taxon>
        <taxon>Pseudomonadaceae</taxon>
        <taxon>Pseudomonas</taxon>
    </lineage>
</organism>
<proteinExistence type="inferred from homology"/>
<comment type="catalytic activity">
    <reaction evidence="1">
        <text>N-(5-phospho-beta-D-ribosyl)anthranilate = 1-(2-carboxyphenylamino)-1-deoxy-D-ribulose 5-phosphate</text>
        <dbReference type="Rhea" id="RHEA:21540"/>
        <dbReference type="ChEBI" id="CHEBI:18277"/>
        <dbReference type="ChEBI" id="CHEBI:58613"/>
        <dbReference type="EC" id="5.3.1.24"/>
    </reaction>
</comment>
<comment type="pathway">
    <text evidence="1">Amino-acid biosynthesis; L-tryptophan biosynthesis; L-tryptophan from chorismate: step 3/5.</text>
</comment>
<comment type="similarity">
    <text evidence="1">Belongs to the TrpF family.</text>
</comment>
<sequence>MPAVRIKICGITRVEDALAAAAAGADAIGLVFYAKSPRAVDIHRAREIVRALPPFVTSVGLFVNASRCELGEILDAVPLDLLQFHGDERAEDCEGHRRPYLKALRVKPGDDIVGRAAAYPGAAGILLDTYVEGVPGGTGAAFDWSLVPTDLGKPLVLAGGLTPDNVGRAVEQVKPYAVDVSGGVEASKGIKDAARVRAFVDAVRSRRRDET</sequence>
<keyword id="KW-0028">Amino-acid biosynthesis</keyword>
<keyword id="KW-0057">Aromatic amino acid biosynthesis</keyword>
<keyword id="KW-0413">Isomerase</keyword>
<keyword id="KW-0822">Tryptophan biosynthesis</keyword>